<reference key="1">
    <citation type="journal article" date="1985" name="Gene">
        <title>Nucleotide sequence and genome organization of bacteriophage S13 DNA.</title>
        <authorList>
            <person name="Lau P.C.K."/>
            <person name="Spencer J.H."/>
        </authorList>
    </citation>
    <scope>NUCLEOTIDE SEQUENCE [GENOMIC DNA]</scope>
</reference>
<evidence type="ECO:0000250" key="1"/>
<evidence type="ECO:0000256" key="2">
    <source>
        <dbReference type="SAM" id="MobiDB-lite"/>
    </source>
</evidence>
<evidence type="ECO:0000305" key="3"/>
<feature type="chain" id="PRO_0000164908" description="Small core protein">
    <location>
        <begin position="1"/>
        <end position="37"/>
    </location>
</feature>
<feature type="region of interest" description="Disordered" evidence="2">
    <location>
        <begin position="1"/>
        <end position="37"/>
    </location>
</feature>
<dbReference type="EMBL" id="M14428">
    <property type="protein sequence ID" value="AAA32589.1"/>
    <property type="molecule type" value="Genomic_DNA"/>
</dbReference>
<dbReference type="PIR" id="JS0456">
    <property type="entry name" value="JS0456"/>
</dbReference>
<dbReference type="SMR" id="P69593"/>
<dbReference type="Proteomes" id="UP000002129">
    <property type="component" value="Segment"/>
</dbReference>
<dbReference type="GO" id="GO:0019028">
    <property type="term" value="C:viral capsid"/>
    <property type="evidence" value="ECO:0007669"/>
    <property type="project" value="UniProtKB-KW"/>
</dbReference>
<dbReference type="GO" id="GO:0003677">
    <property type="term" value="F:DNA binding"/>
    <property type="evidence" value="ECO:0007669"/>
    <property type="project" value="UniProtKB-KW"/>
</dbReference>
<dbReference type="InterPro" id="IPR006815">
    <property type="entry name" value="Microvir_J-like"/>
</dbReference>
<dbReference type="Pfam" id="PF04726">
    <property type="entry name" value="Microvir_J"/>
    <property type="match status" value="1"/>
</dbReference>
<keyword id="KW-0167">Capsid protein</keyword>
<keyword id="KW-0238">DNA-binding</keyword>
<keyword id="KW-1185">Reference proteome</keyword>
<keyword id="KW-0946">Virion</keyword>
<protein>
    <recommendedName>
        <fullName>Small core protein</fullName>
    </recommendedName>
    <alternativeName>
        <fullName>J protein</fullName>
    </alternativeName>
</protein>
<name>VGJ_BPS13</name>
<sequence length="37" mass="4096">SKGKKRSGARPGRPQPLRGTKGKRKGARLWYVGGQQF</sequence>
<proteinExistence type="inferred from homology"/>
<gene>
    <name type="primary">J</name>
</gene>
<organism>
    <name type="scientific">Enterobacteria phage S13</name>
    <name type="common">Bacteriophage S13</name>
    <dbReference type="NCBI Taxonomy" id="10844"/>
    <lineage>
        <taxon>Viruses</taxon>
        <taxon>Monodnaviria</taxon>
        <taxon>Sangervirae</taxon>
        <taxon>Phixviricota</taxon>
        <taxon>Malgrandaviricetes</taxon>
        <taxon>Petitvirales</taxon>
        <taxon>Microviridae</taxon>
        <taxon>Bullavirinae</taxon>
        <taxon>Sinsheimervirus</taxon>
        <taxon>Escherichia phage phiX174</taxon>
        <taxon>Escherichia phage phiX174</taxon>
    </lineage>
</organism>
<comment type="function">
    <text evidence="1">The J protein is associated with the DNA and is situated in an interior cleft of the F protein.</text>
</comment>
<comment type="subunit">
    <text evidence="1">The virion is composed of 60 copies each of the F, G, and J proteins, and 12 copies of the H protein.</text>
</comment>
<comment type="subcellular location">
    <subcellularLocation>
        <location evidence="3">Virion</location>
    </subcellularLocation>
</comment>
<organismHost>
    <name type="scientific">Salmonella</name>
    <dbReference type="NCBI Taxonomy" id="590"/>
</organismHost>
<accession>P69593</accession>
<accession>P03651</accession>